<keyword id="KW-0067">ATP-binding</keyword>
<keyword id="KW-0238">DNA-binding</keyword>
<keyword id="KW-0479">Metal-binding</keyword>
<keyword id="KW-0547">Nucleotide-binding</keyword>
<keyword id="KW-0678">Repressor</keyword>
<keyword id="KW-0804">Transcription</keyword>
<keyword id="KW-0805">Transcription regulation</keyword>
<keyword id="KW-0862">Zinc</keyword>
<keyword id="KW-0863">Zinc-finger</keyword>
<dbReference type="EMBL" id="CP000918">
    <property type="protein sequence ID" value="ACO17864.1"/>
    <property type="molecule type" value="Genomic_DNA"/>
</dbReference>
<dbReference type="RefSeq" id="WP_001203672.1">
    <property type="nucleotide sequence ID" value="NC_012468.1"/>
</dbReference>
<dbReference type="SMR" id="C1C8U9"/>
<dbReference type="GeneID" id="93740109"/>
<dbReference type="KEGG" id="snm:SP70585_1752"/>
<dbReference type="HOGENOM" id="CLU_108412_0_0_9"/>
<dbReference type="Proteomes" id="UP000002211">
    <property type="component" value="Chromosome"/>
</dbReference>
<dbReference type="GO" id="GO:0005524">
    <property type="term" value="F:ATP binding"/>
    <property type="evidence" value="ECO:0007669"/>
    <property type="project" value="UniProtKB-KW"/>
</dbReference>
<dbReference type="GO" id="GO:0003677">
    <property type="term" value="F:DNA binding"/>
    <property type="evidence" value="ECO:0007669"/>
    <property type="project" value="UniProtKB-KW"/>
</dbReference>
<dbReference type="GO" id="GO:0008270">
    <property type="term" value="F:zinc ion binding"/>
    <property type="evidence" value="ECO:0007669"/>
    <property type="project" value="UniProtKB-UniRule"/>
</dbReference>
<dbReference type="GO" id="GO:0045892">
    <property type="term" value="P:negative regulation of DNA-templated transcription"/>
    <property type="evidence" value="ECO:0007669"/>
    <property type="project" value="UniProtKB-UniRule"/>
</dbReference>
<dbReference type="HAMAP" id="MF_00440">
    <property type="entry name" value="NrdR"/>
    <property type="match status" value="1"/>
</dbReference>
<dbReference type="InterPro" id="IPR005144">
    <property type="entry name" value="ATP-cone_dom"/>
</dbReference>
<dbReference type="InterPro" id="IPR055173">
    <property type="entry name" value="NrdR-like_N"/>
</dbReference>
<dbReference type="InterPro" id="IPR003796">
    <property type="entry name" value="RNR_NrdR-like"/>
</dbReference>
<dbReference type="NCBIfam" id="TIGR00244">
    <property type="entry name" value="transcriptional regulator NrdR"/>
    <property type="match status" value="1"/>
</dbReference>
<dbReference type="PANTHER" id="PTHR30455">
    <property type="entry name" value="TRANSCRIPTIONAL REPRESSOR NRDR"/>
    <property type="match status" value="1"/>
</dbReference>
<dbReference type="PANTHER" id="PTHR30455:SF2">
    <property type="entry name" value="TRANSCRIPTIONAL REPRESSOR NRDR"/>
    <property type="match status" value="1"/>
</dbReference>
<dbReference type="Pfam" id="PF03477">
    <property type="entry name" value="ATP-cone"/>
    <property type="match status" value="1"/>
</dbReference>
<dbReference type="Pfam" id="PF22811">
    <property type="entry name" value="Zn_ribbon_NrdR"/>
    <property type="match status" value="1"/>
</dbReference>
<dbReference type="PROSITE" id="PS51161">
    <property type="entry name" value="ATP_CONE"/>
    <property type="match status" value="1"/>
</dbReference>
<sequence>MRCPKCGATKSSVIDSRQAEEGNTIRRRRECDECQHRFTTYERVEERTLVVVKKDGTREQFSRDKIFNGIIRSAQKRPVSSDEINMVVNRIEQKLRGRNENEIQSEDIGSLVMEELAELDEITYVRFASVYRSFKDVSELESLLQQITQSSKKKKER</sequence>
<gene>
    <name evidence="1" type="primary">nrdR</name>
    <name type="ordered locus">SP70585_1752</name>
</gene>
<name>NRDR_STRP7</name>
<evidence type="ECO:0000255" key="1">
    <source>
        <dbReference type="HAMAP-Rule" id="MF_00440"/>
    </source>
</evidence>
<evidence type="ECO:0000256" key="2">
    <source>
        <dbReference type="SAM" id="MobiDB-lite"/>
    </source>
</evidence>
<comment type="function">
    <text evidence="1">Negatively regulates transcription of bacterial ribonucleotide reductase nrd genes and operons by binding to NrdR-boxes.</text>
</comment>
<comment type="cofactor">
    <cofactor evidence="1">
        <name>Zn(2+)</name>
        <dbReference type="ChEBI" id="CHEBI:29105"/>
    </cofactor>
    <text evidence="1">Binds 1 zinc ion.</text>
</comment>
<comment type="similarity">
    <text evidence="1">Belongs to the NrdR family.</text>
</comment>
<proteinExistence type="inferred from homology"/>
<feature type="chain" id="PRO_1000191815" description="Transcriptional repressor NrdR">
    <location>
        <begin position="1"/>
        <end position="157"/>
    </location>
</feature>
<feature type="domain" description="ATP-cone" evidence="1">
    <location>
        <begin position="49"/>
        <end position="139"/>
    </location>
</feature>
<feature type="zinc finger region" evidence="1">
    <location>
        <begin position="3"/>
        <end position="34"/>
    </location>
</feature>
<feature type="region of interest" description="Disordered" evidence="2">
    <location>
        <begin position="1"/>
        <end position="22"/>
    </location>
</feature>
<organism>
    <name type="scientific">Streptococcus pneumoniae (strain 70585)</name>
    <dbReference type="NCBI Taxonomy" id="488221"/>
    <lineage>
        <taxon>Bacteria</taxon>
        <taxon>Bacillati</taxon>
        <taxon>Bacillota</taxon>
        <taxon>Bacilli</taxon>
        <taxon>Lactobacillales</taxon>
        <taxon>Streptococcaceae</taxon>
        <taxon>Streptococcus</taxon>
    </lineage>
</organism>
<accession>C1C8U9</accession>
<reference key="1">
    <citation type="journal article" date="2010" name="Genome Biol.">
        <title>Structure and dynamics of the pan-genome of Streptococcus pneumoniae and closely related species.</title>
        <authorList>
            <person name="Donati C."/>
            <person name="Hiller N.L."/>
            <person name="Tettelin H."/>
            <person name="Muzzi A."/>
            <person name="Croucher N.J."/>
            <person name="Angiuoli S.V."/>
            <person name="Oggioni M."/>
            <person name="Dunning Hotopp J.C."/>
            <person name="Hu F.Z."/>
            <person name="Riley D.R."/>
            <person name="Covacci A."/>
            <person name="Mitchell T.J."/>
            <person name="Bentley S.D."/>
            <person name="Kilian M."/>
            <person name="Ehrlich G.D."/>
            <person name="Rappuoli R."/>
            <person name="Moxon E.R."/>
            <person name="Masignani V."/>
        </authorList>
    </citation>
    <scope>NUCLEOTIDE SEQUENCE [LARGE SCALE GENOMIC DNA]</scope>
    <source>
        <strain>70585</strain>
    </source>
</reference>
<protein>
    <recommendedName>
        <fullName evidence="1">Transcriptional repressor NrdR</fullName>
    </recommendedName>
</protein>